<sequence>MNVIEAAVATPDARVALVIARFNNFINDSLLSGALDALKRIGQVKDENITVVWVPGAYELPVTARALAKTGKHDAVVALGTVIRGGTAHFEFVAGEASSGLASVAMHSDIPVAFGVLTTENIEQAIERAGTKAGNKGAEAALTALEMINVLKAINA</sequence>
<protein>
    <recommendedName>
        <fullName evidence="1">6,7-dimethyl-8-ribityllumazine synthase</fullName>
        <shortName evidence="1">DMRL synthase</shortName>
        <shortName evidence="1">LS</shortName>
        <shortName evidence="1">Lumazine synthase</shortName>
        <ecNumber evidence="1">2.5.1.78</ecNumber>
    </recommendedName>
</protein>
<reference key="1">
    <citation type="journal article" date="2008" name="Environ. Microbiol.">
        <title>The genome of Erwinia tasmaniensis strain Et1/99, a non-pathogenic bacterium in the genus Erwinia.</title>
        <authorList>
            <person name="Kube M."/>
            <person name="Migdoll A.M."/>
            <person name="Mueller I."/>
            <person name="Kuhl H."/>
            <person name="Beck A."/>
            <person name="Reinhardt R."/>
            <person name="Geider K."/>
        </authorList>
    </citation>
    <scope>NUCLEOTIDE SEQUENCE [LARGE SCALE GENOMIC DNA]</scope>
    <source>
        <strain>DSM 17950 / CFBP 7177 / CIP 109463 / NCPPB 4357 / Et1/99</strain>
    </source>
</reference>
<keyword id="KW-1185">Reference proteome</keyword>
<keyword id="KW-0686">Riboflavin biosynthesis</keyword>
<keyword id="KW-0808">Transferase</keyword>
<proteinExistence type="inferred from homology"/>
<name>RISB_ERWT9</name>
<evidence type="ECO:0000255" key="1">
    <source>
        <dbReference type="HAMAP-Rule" id="MF_00178"/>
    </source>
</evidence>
<comment type="function">
    <text evidence="1">Catalyzes the formation of 6,7-dimethyl-8-ribityllumazine by condensation of 5-amino-6-(D-ribitylamino)uracil with 3,4-dihydroxy-2-butanone 4-phosphate. This is the penultimate step in the biosynthesis of riboflavin.</text>
</comment>
<comment type="catalytic activity">
    <reaction evidence="1">
        <text>(2S)-2-hydroxy-3-oxobutyl phosphate + 5-amino-6-(D-ribitylamino)uracil = 6,7-dimethyl-8-(1-D-ribityl)lumazine + phosphate + 2 H2O + H(+)</text>
        <dbReference type="Rhea" id="RHEA:26152"/>
        <dbReference type="ChEBI" id="CHEBI:15377"/>
        <dbReference type="ChEBI" id="CHEBI:15378"/>
        <dbReference type="ChEBI" id="CHEBI:15934"/>
        <dbReference type="ChEBI" id="CHEBI:43474"/>
        <dbReference type="ChEBI" id="CHEBI:58201"/>
        <dbReference type="ChEBI" id="CHEBI:58830"/>
        <dbReference type="EC" id="2.5.1.78"/>
    </reaction>
</comment>
<comment type="pathway">
    <text evidence="1">Cofactor biosynthesis; riboflavin biosynthesis; riboflavin from 2-hydroxy-3-oxobutyl phosphate and 5-amino-6-(D-ribitylamino)uracil: step 1/2.</text>
</comment>
<comment type="subunit">
    <text evidence="1">Forms an icosahedral capsid composed of 60 subunits, arranged as a dodecamer of pentamers.</text>
</comment>
<comment type="similarity">
    <text evidence="1">Belongs to the DMRL synthase family.</text>
</comment>
<dbReference type="EC" id="2.5.1.78" evidence="1"/>
<dbReference type="EMBL" id="CU468135">
    <property type="protein sequence ID" value="CAO97577.1"/>
    <property type="molecule type" value="Genomic_DNA"/>
</dbReference>
<dbReference type="RefSeq" id="WP_012442242.1">
    <property type="nucleotide sequence ID" value="NC_010694.1"/>
</dbReference>
<dbReference type="SMR" id="B2VHS9"/>
<dbReference type="STRING" id="465817.ETA_25310"/>
<dbReference type="KEGG" id="eta:ETA_25310"/>
<dbReference type="eggNOG" id="COG0054">
    <property type="taxonomic scope" value="Bacteria"/>
</dbReference>
<dbReference type="HOGENOM" id="CLU_089358_1_1_6"/>
<dbReference type="OrthoDB" id="9809709at2"/>
<dbReference type="UniPathway" id="UPA00275">
    <property type="reaction ID" value="UER00404"/>
</dbReference>
<dbReference type="Proteomes" id="UP000001726">
    <property type="component" value="Chromosome"/>
</dbReference>
<dbReference type="GO" id="GO:0005829">
    <property type="term" value="C:cytosol"/>
    <property type="evidence" value="ECO:0007669"/>
    <property type="project" value="TreeGrafter"/>
</dbReference>
<dbReference type="GO" id="GO:0009349">
    <property type="term" value="C:riboflavin synthase complex"/>
    <property type="evidence" value="ECO:0007669"/>
    <property type="project" value="InterPro"/>
</dbReference>
<dbReference type="GO" id="GO:0000906">
    <property type="term" value="F:6,7-dimethyl-8-ribityllumazine synthase activity"/>
    <property type="evidence" value="ECO:0007669"/>
    <property type="project" value="UniProtKB-UniRule"/>
</dbReference>
<dbReference type="GO" id="GO:0009231">
    <property type="term" value="P:riboflavin biosynthetic process"/>
    <property type="evidence" value="ECO:0007669"/>
    <property type="project" value="UniProtKB-UniRule"/>
</dbReference>
<dbReference type="CDD" id="cd09209">
    <property type="entry name" value="Lumazine_synthase-I"/>
    <property type="match status" value="1"/>
</dbReference>
<dbReference type="FunFam" id="3.40.50.960:FF:000001">
    <property type="entry name" value="6,7-dimethyl-8-ribityllumazine synthase"/>
    <property type="match status" value="1"/>
</dbReference>
<dbReference type="Gene3D" id="3.40.50.960">
    <property type="entry name" value="Lumazine/riboflavin synthase"/>
    <property type="match status" value="1"/>
</dbReference>
<dbReference type="HAMAP" id="MF_00178">
    <property type="entry name" value="Lumazine_synth"/>
    <property type="match status" value="1"/>
</dbReference>
<dbReference type="InterPro" id="IPR034964">
    <property type="entry name" value="LS"/>
</dbReference>
<dbReference type="InterPro" id="IPR002180">
    <property type="entry name" value="LS/RS"/>
</dbReference>
<dbReference type="InterPro" id="IPR036467">
    <property type="entry name" value="LS/RS_sf"/>
</dbReference>
<dbReference type="NCBIfam" id="TIGR00114">
    <property type="entry name" value="lumazine-synth"/>
    <property type="match status" value="1"/>
</dbReference>
<dbReference type="NCBIfam" id="NF000812">
    <property type="entry name" value="PRK00061.1-4"/>
    <property type="match status" value="1"/>
</dbReference>
<dbReference type="PANTHER" id="PTHR21058:SF0">
    <property type="entry name" value="6,7-DIMETHYL-8-RIBITYLLUMAZINE SYNTHASE"/>
    <property type="match status" value="1"/>
</dbReference>
<dbReference type="PANTHER" id="PTHR21058">
    <property type="entry name" value="6,7-DIMETHYL-8-RIBITYLLUMAZINE SYNTHASE DMRL SYNTHASE LUMAZINE SYNTHASE"/>
    <property type="match status" value="1"/>
</dbReference>
<dbReference type="Pfam" id="PF00885">
    <property type="entry name" value="DMRL_synthase"/>
    <property type="match status" value="1"/>
</dbReference>
<dbReference type="SUPFAM" id="SSF52121">
    <property type="entry name" value="Lumazine synthase"/>
    <property type="match status" value="1"/>
</dbReference>
<gene>
    <name evidence="1" type="primary">ribH</name>
    <name type="ordered locus">ETA_25310</name>
</gene>
<feature type="chain" id="PRO_1000098190" description="6,7-dimethyl-8-ribityllumazine synthase">
    <location>
        <begin position="1"/>
        <end position="156"/>
    </location>
</feature>
<feature type="active site" description="Proton donor" evidence="1">
    <location>
        <position position="89"/>
    </location>
</feature>
<feature type="binding site" evidence="1">
    <location>
        <position position="22"/>
    </location>
    <ligand>
        <name>5-amino-6-(D-ribitylamino)uracil</name>
        <dbReference type="ChEBI" id="CHEBI:15934"/>
    </ligand>
</feature>
<feature type="binding site" evidence="1">
    <location>
        <begin position="57"/>
        <end position="59"/>
    </location>
    <ligand>
        <name>5-amino-6-(D-ribitylamino)uracil</name>
        <dbReference type="ChEBI" id="CHEBI:15934"/>
    </ligand>
</feature>
<feature type="binding site" evidence="1">
    <location>
        <begin position="81"/>
        <end position="83"/>
    </location>
    <ligand>
        <name>5-amino-6-(D-ribitylamino)uracil</name>
        <dbReference type="ChEBI" id="CHEBI:15934"/>
    </ligand>
</feature>
<feature type="binding site" evidence="1">
    <location>
        <begin position="86"/>
        <end position="87"/>
    </location>
    <ligand>
        <name>(2S)-2-hydroxy-3-oxobutyl phosphate</name>
        <dbReference type="ChEBI" id="CHEBI:58830"/>
    </ligand>
</feature>
<feature type="binding site" evidence="1">
    <location>
        <position position="114"/>
    </location>
    <ligand>
        <name>5-amino-6-(D-ribitylamino)uracil</name>
        <dbReference type="ChEBI" id="CHEBI:15934"/>
    </ligand>
</feature>
<feature type="binding site" evidence="1">
    <location>
        <position position="128"/>
    </location>
    <ligand>
        <name>(2S)-2-hydroxy-3-oxobutyl phosphate</name>
        <dbReference type="ChEBI" id="CHEBI:58830"/>
    </ligand>
</feature>
<accession>B2VHS9</accession>
<organism>
    <name type="scientific">Erwinia tasmaniensis (strain DSM 17950 / CFBP 7177 / CIP 109463 / NCPPB 4357 / Et1/99)</name>
    <dbReference type="NCBI Taxonomy" id="465817"/>
    <lineage>
        <taxon>Bacteria</taxon>
        <taxon>Pseudomonadati</taxon>
        <taxon>Pseudomonadota</taxon>
        <taxon>Gammaproteobacteria</taxon>
        <taxon>Enterobacterales</taxon>
        <taxon>Erwiniaceae</taxon>
        <taxon>Erwinia</taxon>
    </lineage>
</organism>